<accession>P40582</accession>
<accession>D6VVW9</accession>
<protein>
    <recommendedName>
        <fullName>Glutathione S-transferase 1</fullName>
        <ecNumber>2.5.1.18</ecNumber>
    </recommendedName>
    <alternativeName>
        <fullName>GST-I</fullName>
    </alternativeName>
</protein>
<evidence type="ECO:0000305" key="1"/>
<organism>
    <name type="scientific">Saccharomyces cerevisiae (strain ATCC 204508 / S288c)</name>
    <name type="common">Baker's yeast</name>
    <dbReference type="NCBI Taxonomy" id="559292"/>
    <lineage>
        <taxon>Eukaryota</taxon>
        <taxon>Fungi</taxon>
        <taxon>Dikarya</taxon>
        <taxon>Ascomycota</taxon>
        <taxon>Saccharomycotina</taxon>
        <taxon>Saccharomycetes</taxon>
        <taxon>Saccharomycetales</taxon>
        <taxon>Saccharomycetaceae</taxon>
        <taxon>Saccharomyces</taxon>
    </lineage>
</organism>
<dbReference type="EC" id="2.5.1.18"/>
<dbReference type="EMBL" id="Z38061">
    <property type="protein sequence ID" value="CAA86198.1"/>
    <property type="molecule type" value="Genomic_DNA"/>
</dbReference>
<dbReference type="EMBL" id="BK006942">
    <property type="protein sequence ID" value="DAA08585.1"/>
    <property type="molecule type" value="Genomic_DNA"/>
</dbReference>
<dbReference type="PIR" id="S48500">
    <property type="entry name" value="S48500"/>
</dbReference>
<dbReference type="RefSeq" id="NP_012304.1">
    <property type="nucleotide sequence ID" value="NM_001179560.1"/>
</dbReference>
<dbReference type="SMR" id="P40582"/>
<dbReference type="BioGRID" id="35029">
    <property type="interactions" value="115"/>
</dbReference>
<dbReference type="DIP" id="DIP-2103N"/>
<dbReference type="FunCoup" id="P40582">
    <property type="interactions" value="167"/>
</dbReference>
<dbReference type="IntAct" id="P40582">
    <property type="interactions" value="72"/>
</dbReference>
<dbReference type="MINT" id="P40582"/>
<dbReference type="STRING" id="4932.YIR038C"/>
<dbReference type="iPTMnet" id="P40582"/>
<dbReference type="PaxDb" id="4932-YIR038C"/>
<dbReference type="PeptideAtlas" id="P40582"/>
<dbReference type="EnsemblFungi" id="YIR038C_mRNA">
    <property type="protein sequence ID" value="YIR038C"/>
    <property type="gene ID" value="YIR038C"/>
</dbReference>
<dbReference type="GeneID" id="854856"/>
<dbReference type="KEGG" id="sce:YIR038C"/>
<dbReference type="AGR" id="SGD:S000001477"/>
<dbReference type="SGD" id="S000001477">
    <property type="gene designation" value="GTT1"/>
</dbReference>
<dbReference type="VEuPathDB" id="FungiDB:YIR038C"/>
<dbReference type="eggNOG" id="KOG0867">
    <property type="taxonomic scope" value="Eukaryota"/>
</dbReference>
<dbReference type="HOGENOM" id="CLU_011226_15_1_1"/>
<dbReference type="InParanoid" id="P40582"/>
<dbReference type="OMA" id="WIHFAES"/>
<dbReference type="OrthoDB" id="2098326at2759"/>
<dbReference type="BioCyc" id="MetaCyc:YIR038C-MONOMER"/>
<dbReference type="BioCyc" id="YEAST:YIR038C-MONOMER"/>
<dbReference type="SABIO-RK" id="P40582"/>
<dbReference type="BioGRID-ORCS" id="854856">
    <property type="hits" value="0 hits in 10 CRISPR screens"/>
</dbReference>
<dbReference type="PRO" id="PR:P40582"/>
<dbReference type="Proteomes" id="UP000002311">
    <property type="component" value="Chromosome IX"/>
</dbReference>
<dbReference type="RNAct" id="P40582">
    <property type="molecule type" value="protein"/>
</dbReference>
<dbReference type="GO" id="GO:0071944">
    <property type="term" value="C:cell periphery"/>
    <property type="evidence" value="ECO:0007005"/>
    <property type="project" value="SGD"/>
</dbReference>
<dbReference type="GO" id="GO:0005737">
    <property type="term" value="C:cytoplasm"/>
    <property type="evidence" value="ECO:0000318"/>
    <property type="project" value="GO_Central"/>
</dbReference>
<dbReference type="GO" id="GO:0005783">
    <property type="term" value="C:endoplasmic reticulum"/>
    <property type="evidence" value="ECO:0000314"/>
    <property type="project" value="SGD"/>
</dbReference>
<dbReference type="GO" id="GO:0005789">
    <property type="term" value="C:endoplasmic reticulum membrane"/>
    <property type="evidence" value="ECO:0007669"/>
    <property type="project" value="UniProtKB-SubCell"/>
</dbReference>
<dbReference type="GO" id="GO:0005741">
    <property type="term" value="C:mitochondrial outer membrane"/>
    <property type="evidence" value="ECO:0007005"/>
    <property type="project" value="SGD"/>
</dbReference>
<dbReference type="GO" id="GO:0005739">
    <property type="term" value="C:mitochondrion"/>
    <property type="evidence" value="ECO:0007005"/>
    <property type="project" value="SGD"/>
</dbReference>
<dbReference type="GO" id="GO:0005886">
    <property type="term" value="C:plasma membrane"/>
    <property type="evidence" value="ECO:0007005"/>
    <property type="project" value="SGD"/>
</dbReference>
<dbReference type="GO" id="GO:0004602">
    <property type="term" value="F:glutathione peroxidase activity"/>
    <property type="evidence" value="ECO:0000314"/>
    <property type="project" value="SGD"/>
</dbReference>
<dbReference type="GO" id="GO:0004364">
    <property type="term" value="F:glutathione transferase activity"/>
    <property type="evidence" value="ECO:0000314"/>
    <property type="project" value="SGD"/>
</dbReference>
<dbReference type="GO" id="GO:0006749">
    <property type="term" value="P:glutathione metabolic process"/>
    <property type="evidence" value="ECO:0000314"/>
    <property type="project" value="SGD"/>
</dbReference>
<dbReference type="CDD" id="cd03189">
    <property type="entry name" value="GST_C_GTT1_like"/>
    <property type="match status" value="1"/>
</dbReference>
<dbReference type="CDD" id="cd03046">
    <property type="entry name" value="GST_N_GTT1_like"/>
    <property type="match status" value="1"/>
</dbReference>
<dbReference type="FunFam" id="3.40.30.10:FF:000156">
    <property type="entry name" value="Glutathione S-transferase 1"/>
    <property type="match status" value="1"/>
</dbReference>
<dbReference type="Gene3D" id="1.20.1050.10">
    <property type="match status" value="1"/>
</dbReference>
<dbReference type="Gene3D" id="3.40.30.10">
    <property type="entry name" value="Glutaredoxin"/>
    <property type="match status" value="1"/>
</dbReference>
<dbReference type="InterPro" id="IPR010987">
    <property type="entry name" value="Glutathione-S-Trfase_C-like"/>
</dbReference>
<dbReference type="InterPro" id="IPR036282">
    <property type="entry name" value="Glutathione-S-Trfase_C_sf"/>
</dbReference>
<dbReference type="InterPro" id="IPR040079">
    <property type="entry name" value="Glutathione_S-Trfase"/>
</dbReference>
<dbReference type="InterPro" id="IPR004045">
    <property type="entry name" value="Glutathione_S-Trfase_N"/>
</dbReference>
<dbReference type="InterPro" id="IPR004046">
    <property type="entry name" value="GST_C"/>
</dbReference>
<dbReference type="InterPro" id="IPR036249">
    <property type="entry name" value="Thioredoxin-like_sf"/>
</dbReference>
<dbReference type="PANTHER" id="PTHR44051:SF9">
    <property type="entry name" value="GLUTATHIONE S-TRANSFERASE 1"/>
    <property type="match status" value="1"/>
</dbReference>
<dbReference type="PANTHER" id="PTHR44051">
    <property type="entry name" value="GLUTATHIONE S-TRANSFERASE-RELATED"/>
    <property type="match status" value="1"/>
</dbReference>
<dbReference type="Pfam" id="PF00043">
    <property type="entry name" value="GST_C"/>
    <property type="match status" value="1"/>
</dbReference>
<dbReference type="Pfam" id="PF02798">
    <property type="entry name" value="GST_N"/>
    <property type="match status" value="1"/>
</dbReference>
<dbReference type="SFLD" id="SFLDS00019">
    <property type="entry name" value="Glutathione_Transferase_(cytos"/>
    <property type="match status" value="1"/>
</dbReference>
<dbReference type="SFLD" id="SFLDG00358">
    <property type="entry name" value="Main_(cytGST)"/>
    <property type="match status" value="1"/>
</dbReference>
<dbReference type="SUPFAM" id="SSF47616">
    <property type="entry name" value="GST C-terminal domain-like"/>
    <property type="match status" value="1"/>
</dbReference>
<dbReference type="SUPFAM" id="SSF52833">
    <property type="entry name" value="Thioredoxin-like"/>
    <property type="match status" value="1"/>
</dbReference>
<dbReference type="PROSITE" id="PS50405">
    <property type="entry name" value="GST_CTER"/>
    <property type="match status" value="1"/>
</dbReference>
<dbReference type="PROSITE" id="PS50404">
    <property type="entry name" value="GST_NTER"/>
    <property type="match status" value="1"/>
</dbReference>
<feature type="chain" id="PRO_0000185987" description="Glutathione S-transferase 1">
    <location>
        <begin position="1"/>
        <end position="234"/>
    </location>
</feature>
<feature type="domain" description="GST N-terminal">
    <location>
        <begin position="3"/>
        <end position="90"/>
    </location>
</feature>
<feature type="domain" description="GST C-terminal">
    <location>
        <begin position="96"/>
        <end position="234"/>
    </location>
</feature>
<comment type="catalytic activity">
    <reaction>
        <text>RX + glutathione = an S-substituted glutathione + a halide anion + H(+)</text>
        <dbReference type="Rhea" id="RHEA:16437"/>
        <dbReference type="ChEBI" id="CHEBI:15378"/>
        <dbReference type="ChEBI" id="CHEBI:16042"/>
        <dbReference type="ChEBI" id="CHEBI:17792"/>
        <dbReference type="ChEBI" id="CHEBI:57925"/>
        <dbReference type="ChEBI" id="CHEBI:90779"/>
        <dbReference type="EC" id="2.5.1.18"/>
    </reaction>
</comment>
<comment type="subunit">
    <text>Homodimer.</text>
</comment>
<comment type="subcellular location">
    <subcellularLocation>
        <location>Endoplasmic reticulum membrane</location>
        <topology>Peripheral membrane protein</topology>
    </subcellularLocation>
</comment>
<comment type="similarity">
    <text evidence="1">Belongs to the GST superfamily.</text>
</comment>
<name>GST1_YEAST</name>
<keyword id="KW-0256">Endoplasmic reticulum</keyword>
<keyword id="KW-0472">Membrane</keyword>
<keyword id="KW-1185">Reference proteome</keyword>
<keyword id="KW-0808">Transferase</keyword>
<proteinExistence type="evidence at protein level"/>
<gene>
    <name type="primary">GTT1</name>
    <name type="ordered locus">YIR038C</name>
</gene>
<reference key="1">
    <citation type="journal article" date="1997" name="Nature">
        <title>The nucleotide sequence of Saccharomyces cerevisiae chromosome IX.</title>
        <authorList>
            <person name="Churcher C.M."/>
            <person name="Bowman S."/>
            <person name="Badcock K."/>
            <person name="Bankier A.T."/>
            <person name="Brown D."/>
            <person name="Chillingworth T."/>
            <person name="Connor R."/>
            <person name="Devlin K."/>
            <person name="Gentles S."/>
            <person name="Hamlin N."/>
            <person name="Harris D.E."/>
            <person name="Horsnell T."/>
            <person name="Hunt S."/>
            <person name="Jagels K."/>
            <person name="Jones M."/>
            <person name="Lye G."/>
            <person name="Moule S."/>
            <person name="Odell C."/>
            <person name="Pearson D."/>
            <person name="Rajandream M.A."/>
            <person name="Rice P."/>
            <person name="Rowley N."/>
            <person name="Skelton J."/>
            <person name="Smith V."/>
            <person name="Walsh S.V."/>
            <person name="Whitehead S."/>
            <person name="Barrell B.G."/>
        </authorList>
    </citation>
    <scope>NUCLEOTIDE SEQUENCE [LARGE SCALE GENOMIC DNA]</scope>
    <source>
        <strain>ATCC 204508 / S288c</strain>
    </source>
</reference>
<reference key="2">
    <citation type="journal article" date="2014" name="G3 (Bethesda)">
        <title>The reference genome sequence of Saccharomyces cerevisiae: Then and now.</title>
        <authorList>
            <person name="Engel S.R."/>
            <person name="Dietrich F.S."/>
            <person name="Fisk D.G."/>
            <person name="Binkley G."/>
            <person name="Balakrishnan R."/>
            <person name="Costanzo M.C."/>
            <person name="Dwight S.S."/>
            <person name="Hitz B.C."/>
            <person name="Karra K."/>
            <person name="Nash R.S."/>
            <person name="Weng S."/>
            <person name="Wong E.D."/>
            <person name="Lloyd P."/>
            <person name="Skrzypek M.S."/>
            <person name="Miyasato S.R."/>
            <person name="Simison M."/>
            <person name="Cherry J.M."/>
        </authorList>
    </citation>
    <scope>GENOME REANNOTATION</scope>
    <source>
        <strain>ATCC 204508 / S288c</strain>
    </source>
</reference>
<reference key="3">
    <citation type="journal article" date="1998" name="J. Biol. Chem.">
        <title>A novel membrane-bound glutathione S-transferase functions in the stationary phase of the yeast Saccharomyces cerevisiae.</title>
        <authorList>
            <person name="Choi J.H."/>
            <person name="Lou W."/>
            <person name="Vancura A."/>
        </authorList>
    </citation>
    <scope>CHARACTERIZATION</scope>
</reference>
<sequence>MSLPIIKVHWLDHSRAFRLLWLLDHLNLEYEIVPYKRDANFRAPPELKKIHPLGRSPLLEVQDRETGKKKILAESGFIFQYVLQHFDHSHVLMSEDADIADQINYYLFYVEGSLQPPLMIEFILSKVKDSGMPFPISYLARKVADKISQAYSSGEVKNQFDFVEGEISKNNGYLVDGKLSGADILMSFPLQMAFERKFAAPEDYPAISKWLKTITSEESYAASKEKARALGSNF</sequence>